<feature type="chain" id="PRO_1000122990" description="Elongation factor P">
    <location>
        <begin position="1"/>
        <end position="185"/>
    </location>
</feature>
<dbReference type="EMBL" id="CP000227">
    <property type="protein sequence ID" value="ACM14412.1"/>
    <property type="molecule type" value="Genomic_DNA"/>
</dbReference>
<dbReference type="SMR" id="B9IXJ1"/>
<dbReference type="KEGG" id="bcq:BCQ_3984"/>
<dbReference type="HOGENOM" id="CLU_074944_0_1_9"/>
<dbReference type="UniPathway" id="UPA00345"/>
<dbReference type="Proteomes" id="UP000000441">
    <property type="component" value="Chromosome"/>
</dbReference>
<dbReference type="GO" id="GO:0005737">
    <property type="term" value="C:cytoplasm"/>
    <property type="evidence" value="ECO:0007669"/>
    <property type="project" value="UniProtKB-SubCell"/>
</dbReference>
<dbReference type="GO" id="GO:0003746">
    <property type="term" value="F:translation elongation factor activity"/>
    <property type="evidence" value="ECO:0007669"/>
    <property type="project" value="UniProtKB-UniRule"/>
</dbReference>
<dbReference type="GO" id="GO:0043043">
    <property type="term" value="P:peptide biosynthetic process"/>
    <property type="evidence" value="ECO:0007669"/>
    <property type="project" value="InterPro"/>
</dbReference>
<dbReference type="CDD" id="cd04470">
    <property type="entry name" value="S1_EF-P_repeat_1"/>
    <property type="match status" value="1"/>
</dbReference>
<dbReference type="CDD" id="cd05794">
    <property type="entry name" value="S1_EF-P_repeat_2"/>
    <property type="match status" value="1"/>
</dbReference>
<dbReference type="FunFam" id="2.30.30.30:FF:000010">
    <property type="entry name" value="Elongation factor P"/>
    <property type="match status" value="1"/>
</dbReference>
<dbReference type="FunFam" id="2.40.50.140:FF:000004">
    <property type="entry name" value="Elongation factor P"/>
    <property type="match status" value="1"/>
</dbReference>
<dbReference type="FunFam" id="2.40.50.140:FF:000009">
    <property type="entry name" value="Elongation factor P"/>
    <property type="match status" value="1"/>
</dbReference>
<dbReference type="Gene3D" id="2.30.30.30">
    <property type="match status" value="1"/>
</dbReference>
<dbReference type="Gene3D" id="2.40.50.140">
    <property type="entry name" value="Nucleic acid-binding proteins"/>
    <property type="match status" value="2"/>
</dbReference>
<dbReference type="HAMAP" id="MF_00141">
    <property type="entry name" value="EF_P"/>
    <property type="match status" value="1"/>
</dbReference>
<dbReference type="InterPro" id="IPR015365">
    <property type="entry name" value="Elong-fact-P_C"/>
</dbReference>
<dbReference type="InterPro" id="IPR012340">
    <property type="entry name" value="NA-bd_OB-fold"/>
</dbReference>
<dbReference type="InterPro" id="IPR014722">
    <property type="entry name" value="Rib_uL2_dom2"/>
</dbReference>
<dbReference type="InterPro" id="IPR020599">
    <property type="entry name" value="Transl_elong_fac_P/YeiP"/>
</dbReference>
<dbReference type="InterPro" id="IPR013185">
    <property type="entry name" value="Transl_elong_KOW-like"/>
</dbReference>
<dbReference type="InterPro" id="IPR001059">
    <property type="entry name" value="Transl_elong_P/YeiP_cen"/>
</dbReference>
<dbReference type="InterPro" id="IPR013852">
    <property type="entry name" value="Transl_elong_P/YeiP_CS"/>
</dbReference>
<dbReference type="InterPro" id="IPR011768">
    <property type="entry name" value="Transl_elongation_fac_P"/>
</dbReference>
<dbReference type="InterPro" id="IPR008991">
    <property type="entry name" value="Translation_prot_SH3-like_sf"/>
</dbReference>
<dbReference type="NCBIfam" id="TIGR00038">
    <property type="entry name" value="efp"/>
    <property type="match status" value="1"/>
</dbReference>
<dbReference type="NCBIfam" id="NF001810">
    <property type="entry name" value="PRK00529.1"/>
    <property type="match status" value="1"/>
</dbReference>
<dbReference type="PANTHER" id="PTHR30053">
    <property type="entry name" value="ELONGATION FACTOR P"/>
    <property type="match status" value="1"/>
</dbReference>
<dbReference type="PANTHER" id="PTHR30053:SF12">
    <property type="entry name" value="ELONGATION FACTOR P (EF-P) FAMILY PROTEIN"/>
    <property type="match status" value="1"/>
</dbReference>
<dbReference type="Pfam" id="PF01132">
    <property type="entry name" value="EFP"/>
    <property type="match status" value="1"/>
</dbReference>
<dbReference type="Pfam" id="PF08207">
    <property type="entry name" value="EFP_N"/>
    <property type="match status" value="1"/>
</dbReference>
<dbReference type="Pfam" id="PF09285">
    <property type="entry name" value="Elong-fact-P_C"/>
    <property type="match status" value="1"/>
</dbReference>
<dbReference type="PIRSF" id="PIRSF005901">
    <property type="entry name" value="EF-P"/>
    <property type="match status" value="1"/>
</dbReference>
<dbReference type="SMART" id="SM01185">
    <property type="entry name" value="EFP"/>
    <property type="match status" value="1"/>
</dbReference>
<dbReference type="SMART" id="SM00841">
    <property type="entry name" value="Elong-fact-P_C"/>
    <property type="match status" value="1"/>
</dbReference>
<dbReference type="SUPFAM" id="SSF50249">
    <property type="entry name" value="Nucleic acid-binding proteins"/>
    <property type="match status" value="2"/>
</dbReference>
<dbReference type="SUPFAM" id="SSF50104">
    <property type="entry name" value="Translation proteins SH3-like domain"/>
    <property type="match status" value="1"/>
</dbReference>
<dbReference type="PROSITE" id="PS01275">
    <property type="entry name" value="EFP"/>
    <property type="match status" value="1"/>
</dbReference>
<proteinExistence type="inferred from homology"/>
<keyword id="KW-0963">Cytoplasm</keyword>
<keyword id="KW-0251">Elongation factor</keyword>
<keyword id="KW-0648">Protein biosynthesis</keyword>
<reference key="1">
    <citation type="journal article" date="2009" name="J. Bacteriol.">
        <title>Complete genome sequence of the extremophilic Bacillus cereus strain Q1 with industrial applications.</title>
        <authorList>
            <person name="Xiong Z."/>
            <person name="Jiang Y."/>
            <person name="Qi D."/>
            <person name="Lu H."/>
            <person name="Yang F."/>
            <person name="Yang J."/>
            <person name="Chen L."/>
            <person name="Sun L."/>
            <person name="Xu X."/>
            <person name="Xue Y."/>
            <person name="Zhu Y."/>
            <person name="Jin Q."/>
        </authorList>
    </citation>
    <scope>NUCLEOTIDE SEQUENCE [LARGE SCALE GENOMIC DNA]</scope>
    <source>
        <strain>Q1</strain>
    </source>
</reference>
<evidence type="ECO:0000255" key="1">
    <source>
        <dbReference type="HAMAP-Rule" id="MF_00141"/>
    </source>
</evidence>
<name>EFP_BACCQ</name>
<sequence>MISVNDFRTGLTIAVDNGLWQVLDFQHVKPGKGAAFVRSKLRNLRTGSVQEKTFRAGEKVEKAHIENRRMQYLYASGESHVFMDNGTYEQIELGEKQIERELKFLKENMEVSIMTYQGEVLGVELPNTVELQVTETEPGIKGDTASNVTKPATLETGLVVQVPIFINEGETLIINTGEGKYVSRA</sequence>
<accession>B9IXJ1</accession>
<comment type="function">
    <text evidence="1">Involved in peptide bond synthesis. Stimulates efficient translation and peptide-bond synthesis on native or reconstituted 70S ribosomes in vitro. Probably functions indirectly by altering the affinity of the ribosome for aminoacyl-tRNA, thus increasing their reactivity as acceptors for peptidyl transferase.</text>
</comment>
<comment type="pathway">
    <text evidence="1">Protein biosynthesis; polypeptide chain elongation.</text>
</comment>
<comment type="subcellular location">
    <subcellularLocation>
        <location evidence="1">Cytoplasm</location>
    </subcellularLocation>
</comment>
<comment type="similarity">
    <text evidence="1">Belongs to the elongation factor P family.</text>
</comment>
<organism>
    <name type="scientific">Bacillus cereus (strain Q1)</name>
    <dbReference type="NCBI Taxonomy" id="361100"/>
    <lineage>
        <taxon>Bacteria</taxon>
        <taxon>Bacillati</taxon>
        <taxon>Bacillota</taxon>
        <taxon>Bacilli</taxon>
        <taxon>Bacillales</taxon>
        <taxon>Bacillaceae</taxon>
        <taxon>Bacillus</taxon>
        <taxon>Bacillus cereus group</taxon>
    </lineage>
</organism>
<protein>
    <recommendedName>
        <fullName evidence="1">Elongation factor P</fullName>
        <shortName evidence="1">EF-P</shortName>
    </recommendedName>
</protein>
<gene>
    <name evidence="1" type="primary">efp</name>
    <name type="ordered locus">BCQ_3984</name>
</gene>